<accession>Q87B82</accession>
<evidence type="ECO:0000255" key="1">
    <source>
        <dbReference type="HAMAP-Rule" id="MF_00323"/>
    </source>
</evidence>
<keyword id="KW-0963">Cytoplasm</keyword>
<keyword id="KW-0350">Heme biosynthesis</keyword>
<keyword id="KW-0408">Iron</keyword>
<keyword id="KW-0456">Lyase</keyword>
<keyword id="KW-0479">Metal-binding</keyword>
<keyword id="KW-0627">Porphyrin biosynthesis</keyword>
<keyword id="KW-1185">Reference proteome</keyword>
<proteinExistence type="inferred from homology"/>
<gene>
    <name evidence="1" type="primary">hemH</name>
    <name type="ordered locus">PD_1576</name>
</gene>
<sequence>MNHTSDTALLIVNLGTPEAPTAAAVRRYLGEFLSDRRVVSIPPLFWKPLLHMVILPIRGPRSASKYAKVWLQEGSPLSVYTRRIAEGLTQHLPDWRVAWAMRYGAPALTKALDALQAQQVRRIVILPLYPQYSTTTTASVQDVVEAWCKRTPQVQVECIQDYAEDPAWVAAVAASIRRHWQAHGRSEKLMFSFHGLPQRVANNGDPYPQRCQVSASLIAAALNLNESEWVLGYQSRFGAERWLQPYAEPTLWALAESGIRRFDLVCPGFSVDCLETLEEVALGFSETLAARGATMRYIPCLNDDPAHVQALAGLAQRALP</sequence>
<reference key="1">
    <citation type="journal article" date="2003" name="J. Bacteriol.">
        <title>Comparative analyses of the complete genome sequences of Pierce's disease and citrus variegated chlorosis strains of Xylella fastidiosa.</title>
        <authorList>
            <person name="Van Sluys M.A."/>
            <person name="de Oliveira M.C."/>
            <person name="Monteiro-Vitorello C.B."/>
            <person name="Miyaki C.Y."/>
            <person name="Furlan L.R."/>
            <person name="Camargo L.E.A."/>
            <person name="da Silva A.C.R."/>
            <person name="Moon D.H."/>
            <person name="Takita M.A."/>
            <person name="Lemos E.G.M."/>
            <person name="Machado M.A."/>
            <person name="Ferro M.I.T."/>
            <person name="da Silva F.R."/>
            <person name="Goldman M.H.S."/>
            <person name="Goldman G.H."/>
            <person name="Lemos M.V.F."/>
            <person name="El-Dorry H."/>
            <person name="Tsai S.M."/>
            <person name="Carrer H."/>
            <person name="Carraro D.M."/>
            <person name="de Oliveira R.C."/>
            <person name="Nunes L.R."/>
            <person name="Siqueira W.J."/>
            <person name="Coutinho L.L."/>
            <person name="Kimura E.T."/>
            <person name="Ferro E.S."/>
            <person name="Harakava R."/>
            <person name="Kuramae E.E."/>
            <person name="Marino C.L."/>
            <person name="Giglioti E."/>
            <person name="Abreu I.L."/>
            <person name="Alves L.M.C."/>
            <person name="do Amaral A.M."/>
            <person name="Baia G.S."/>
            <person name="Blanco S.R."/>
            <person name="Brito M.S."/>
            <person name="Cannavan F.S."/>
            <person name="Celestino A.V."/>
            <person name="da Cunha A.F."/>
            <person name="Fenille R.C."/>
            <person name="Ferro J.A."/>
            <person name="Formighieri E.F."/>
            <person name="Kishi L.T."/>
            <person name="Leoni S.G."/>
            <person name="Oliveira A.R."/>
            <person name="Rosa V.E. Jr."/>
            <person name="Sassaki F.T."/>
            <person name="Sena J.A.D."/>
            <person name="de Souza A.A."/>
            <person name="Truffi D."/>
            <person name="Tsukumo F."/>
            <person name="Yanai G.M."/>
            <person name="Zaros L.G."/>
            <person name="Civerolo E.L."/>
            <person name="Simpson A.J.G."/>
            <person name="Almeida N.F. Jr."/>
            <person name="Setubal J.C."/>
            <person name="Kitajima J.P."/>
        </authorList>
    </citation>
    <scope>NUCLEOTIDE SEQUENCE [LARGE SCALE GENOMIC DNA]</scope>
    <source>
        <strain>Temecula1 / ATCC 700964</strain>
    </source>
</reference>
<comment type="function">
    <text evidence="1">Catalyzes the ferrous insertion into protoporphyrin IX.</text>
</comment>
<comment type="catalytic activity">
    <reaction evidence="1">
        <text>heme b + 2 H(+) = protoporphyrin IX + Fe(2+)</text>
        <dbReference type="Rhea" id="RHEA:22584"/>
        <dbReference type="ChEBI" id="CHEBI:15378"/>
        <dbReference type="ChEBI" id="CHEBI:29033"/>
        <dbReference type="ChEBI" id="CHEBI:57306"/>
        <dbReference type="ChEBI" id="CHEBI:60344"/>
        <dbReference type="EC" id="4.98.1.1"/>
    </reaction>
</comment>
<comment type="pathway">
    <text evidence="1">Porphyrin-containing compound metabolism; protoheme biosynthesis; protoheme from protoporphyrin-IX: step 1/1.</text>
</comment>
<comment type="subcellular location">
    <subcellularLocation>
        <location evidence="1">Cytoplasm</location>
    </subcellularLocation>
</comment>
<comment type="similarity">
    <text evidence="1">Belongs to the ferrochelatase family.</text>
</comment>
<dbReference type="EC" id="4.98.1.1" evidence="1"/>
<dbReference type="EMBL" id="AE009442">
    <property type="protein sequence ID" value="AAO29418.1"/>
    <property type="molecule type" value="Genomic_DNA"/>
</dbReference>
<dbReference type="RefSeq" id="WP_004088767.1">
    <property type="nucleotide sequence ID" value="NC_004556.1"/>
</dbReference>
<dbReference type="SMR" id="Q87B82"/>
<dbReference type="DNASU" id="1142918"/>
<dbReference type="GeneID" id="93905403"/>
<dbReference type="KEGG" id="xft:PD_1576"/>
<dbReference type="HOGENOM" id="CLU_018884_0_0_6"/>
<dbReference type="UniPathway" id="UPA00252">
    <property type="reaction ID" value="UER00325"/>
</dbReference>
<dbReference type="Proteomes" id="UP000002516">
    <property type="component" value="Chromosome"/>
</dbReference>
<dbReference type="GO" id="GO:0005737">
    <property type="term" value="C:cytoplasm"/>
    <property type="evidence" value="ECO:0007669"/>
    <property type="project" value="UniProtKB-SubCell"/>
</dbReference>
<dbReference type="GO" id="GO:0004325">
    <property type="term" value="F:ferrochelatase activity"/>
    <property type="evidence" value="ECO:0007669"/>
    <property type="project" value="UniProtKB-UniRule"/>
</dbReference>
<dbReference type="GO" id="GO:0046872">
    <property type="term" value="F:metal ion binding"/>
    <property type="evidence" value="ECO:0007669"/>
    <property type="project" value="UniProtKB-KW"/>
</dbReference>
<dbReference type="GO" id="GO:0006783">
    <property type="term" value="P:heme biosynthetic process"/>
    <property type="evidence" value="ECO:0007669"/>
    <property type="project" value="UniProtKB-UniRule"/>
</dbReference>
<dbReference type="CDD" id="cd00419">
    <property type="entry name" value="Ferrochelatase_C"/>
    <property type="match status" value="1"/>
</dbReference>
<dbReference type="CDD" id="cd03411">
    <property type="entry name" value="Ferrochelatase_N"/>
    <property type="match status" value="1"/>
</dbReference>
<dbReference type="FunFam" id="3.40.50.1400:FF:000012">
    <property type="entry name" value="Ferrochelatase"/>
    <property type="match status" value="1"/>
</dbReference>
<dbReference type="Gene3D" id="3.40.50.1400">
    <property type="match status" value="2"/>
</dbReference>
<dbReference type="HAMAP" id="MF_00323">
    <property type="entry name" value="Ferrochelatase"/>
    <property type="match status" value="1"/>
</dbReference>
<dbReference type="InterPro" id="IPR001015">
    <property type="entry name" value="Ferrochelatase"/>
</dbReference>
<dbReference type="InterPro" id="IPR019772">
    <property type="entry name" value="Ferrochelatase_AS"/>
</dbReference>
<dbReference type="InterPro" id="IPR033644">
    <property type="entry name" value="Ferrochelatase_C"/>
</dbReference>
<dbReference type="InterPro" id="IPR033659">
    <property type="entry name" value="Ferrochelatase_N"/>
</dbReference>
<dbReference type="NCBIfam" id="TIGR00109">
    <property type="entry name" value="hemH"/>
    <property type="match status" value="1"/>
</dbReference>
<dbReference type="PANTHER" id="PTHR11108">
    <property type="entry name" value="FERROCHELATASE"/>
    <property type="match status" value="1"/>
</dbReference>
<dbReference type="PANTHER" id="PTHR11108:SF1">
    <property type="entry name" value="FERROCHELATASE, MITOCHONDRIAL"/>
    <property type="match status" value="1"/>
</dbReference>
<dbReference type="Pfam" id="PF00762">
    <property type="entry name" value="Ferrochelatase"/>
    <property type="match status" value="1"/>
</dbReference>
<dbReference type="SUPFAM" id="SSF53800">
    <property type="entry name" value="Chelatase"/>
    <property type="match status" value="1"/>
</dbReference>
<dbReference type="PROSITE" id="PS00534">
    <property type="entry name" value="FERROCHELATASE"/>
    <property type="match status" value="1"/>
</dbReference>
<name>HEMH_XYLFT</name>
<feature type="chain" id="PRO_0000175232" description="Ferrochelatase">
    <location>
        <begin position="1"/>
        <end position="320"/>
    </location>
</feature>
<feature type="binding site" evidence="1">
    <location>
        <position position="194"/>
    </location>
    <ligand>
        <name>Fe cation</name>
        <dbReference type="ChEBI" id="CHEBI:24875"/>
    </ligand>
</feature>
<feature type="binding site" evidence="1">
    <location>
        <position position="275"/>
    </location>
    <ligand>
        <name>Fe cation</name>
        <dbReference type="ChEBI" id="CHEBI:24875"/>
    </ligand>
</feature>
<protein>
    <recommendedName>
        <fullName evidence="1">Ferrochelatase</fullName>
        <ecNumber evidence="1">4.98.1.1</ecNumber>
    </recommendedName>
    <alternativeName>
        <fullName evidence="1">Heme synthase</fullName>
    </alternativeName>
    <alternativeName>
        <fullName evidence="1">Protoheme ferro-lyase</fullName>
    </alternativeName>
</protein>
<organism>
    <name type="scientific">Xylella fastidiosa (strain Temecula1 / ATCC 700964)</name>
    <dbReference type="NCBI Taxonomy" id="183190"/>
    <lineage>
        <taxon>Bacteria</taxon>
        <taxon>Pseudomonadati</taxon>
        <taxon>Pseudomonadota</taxon>
        <taxon>Gammaproteobacteria</taxon>
        <taxon>Lysobacterales</taxon>
        <taxon>Lysobacteraceae</taxon>
        <taxon>Xylella</taxon>
    </lineage>
</organism>